<proteinExistence type="inferred from homology"/>
<organism>
    <name type="scientific">Methylocella silvestris (strain DSM 15510 / CIP 108128 / LMG 27833 / NCIMB 13906 / BL2)</name>
    <dbReference type="NCBI Taxonomy" id="395965"/>
    <lineage>
        <taxon>Bacteria</taxon>
        <taxon>Pseudomonadati</taxon>
        <taxon>Pseudomonadota</taxon>
        <taxon>Alphaproteobacteria</taxon>
        <taxon>Hyphomicrobiales</taxon>
        <taxon>Beijerinckiaceae</taxon>
        <taxon>Methylocella</taxon>
    </lineage>
</organism>
<name>G6PI_METSB</name>
<keyword id="KW-0963">Cytoplasm</keyword>
<keyword id="KW-0312">Gluconeogenesis</keyword>
<keyword id="KW-0324">Glycolysis</keyword>
<keyword id="KW-0413">Isomerase</keyword>
<keyword id="KW-1185">Reference proteome</keyword>
<feature type="chain" id="PRO_1000206368" description="Glucose-6-phosphate isomerase">
    <location>
        <begin position="1"/>
        <end position="549"/>
    </location>
</feature>
<feature type="active site" description="Proton donor" evidence="1">
    <location>
        <position position="352"/>
    </location>
</feature>
<feature type="active site" evidence="1">
    <location>
        <position position="383"/>
    </location>
</feature>
<feature type="active site" evidence="1">
    <location>
        <position position="511"/>
    </location>
</feature>
<sequence length="549" mass="59687">MDRSKVANAFAALDAYARRSGAPKIADLFAADPQRFDRFHARFDDLLYDFSKHRLDAETLRLLLDLGRAAEVEPRREALFEGDPVNITERRAALHMALRNLSGAPMRAAGEDVAAMVEAEREKLLAFAEAVRSGAIRAANGARFTDIVNFGIGGSDLGPAMAARALSPFIADHLRLHFVANVDGADFADTMRNTPVETTLFIVCSKTFTTLETMTNAATARAYVAERLGPDAIASHFCAVSTQLDRIAAFGVRSDRVFGFWDWVGGRYSIWSSIGLSLAIGVGRDNFEAFLRGGEDIDRHFREAPLERNIPVLMALIGVLNRNVFGYATQAVIPYDQRLARFPAYLQQLDMESNGKSVDLSGARVAYETSPVVWGEPGTNGQHAFFQLLHQGTEIVPVDFLVAAKPTAADETHHRILFANCLAQSQALMQGRPLEAVSAQLAAQGLSPDAIAALAPHKVFDGDRPSSTFLYTALTPRTLGRLIALYEHKIFVQGVIWDINSFDQWGVELGKELAQKLAPIVGDDSASTEALDASTAGLVQAARARRAGA</sequence>
<evidence type="ECO:0000255" key="1">
    <source>
        <dbReference type="HAMAP-Rule" id="MF_00473"/>
    </source>
</evidence>
<accession>B8ENL8</accession>
<reference key="1">
    <citation type="journal article" date="2010" name="J. Bacteriol.">
        <title>Complete genome sequence of the aerobic facultative methanotroph Methylocella silvestris BL2.</title>
        <authorList>
            <person name="Chen Y."/>
            <person name="Crombie A."/>
            <person name="Rahman M.T."/>
            <person name="Dedysh S.N."/>
            <person name="Liesack W."/>
            <person name="Stott M.B."/>
            <person name="Alam M."/>
            <person name="Theisen A.R."/>
            <person name="Murrell J.C."/>
            <person name="Dunfield P.F."/>
        </authorList>
    </citation>
    <scope>NUCLEOTIDE SEQUENCE [LARGE SCALE GENOMIC DNA]</scope>
    <source>
        <strain>DSM 15510 / CIP 108128 / LMG 27833 / NCIMB 13906 / BL2</strain>
    </source>
</reference>
<comment type="function">
    <text evidence="1">Catalyzes the reversible isomerization of glucose-6-phosphate to fructose-6-phosphate.</text>
</comment>
<comment type="catalytic activity">
    <reaction evidence="1">
        <text>alpha-D-glucose 6-phosphate = beta-D-fructose 6-phosphate</text>
        <dbReference type="Rhea" id="RHEA:11816"/>
        <dbReference type="ChEBI" id="CHEBI:57634"/>
        <dbReference type="ChEBI" id="CHEBI:58225"/>
        <dbReference type="EC" id="5.3.1.9"/>
    </reaction>
</comment>
<comment type="pathway">
    <text evidence="1">Carbohydrate biosynthesis; gluconeogenesis.</text>
</comment>
<comment type="pathway">
    <text evidence="1">Carbohydrate degradation; glycolysis; D-glyceraldehyde 3-phosphate and glycerone phosphate from D-glucose: step 2/4.</text>
</comment>
<comment type="subcellular location">
    <subcellularLocation>
        <location evidence="1">Cytoplasm</location>
    </subcellularLocation>
</comment>
<comment type="similarity">
    <text evidence="1">Belongs to the GPI family.</text>
</comment>
<gene>
    <name evidence="1" type="primary">pgi</name>
    <name type="ordered locus">Msil_1859</name>
</gene>
<dbReference type="EC" id="5.3.1.9" evidence="1"/>
<dbReference type="EMBL" id="CP001280">
    <property type="protein sequence ID" value="ACK50804.1"/>
    <property type="molecule type" value="Genomic_DNA"/>
</dbReference>
<dbReference type="RefSeq" id="WP_012590874.1">
    <property type="nucleotide sequence ID" value="NC_011666.1"/>
</dbReference>
<dbReference type="SMR" id="B8ENL8"/>
<dbReference type="STRING" id="395965.Msil_1859"/>
<dbReference type="KEGG" id="msl:Msil_1859"/>
<dbReference type="eggNOG" id="COG0166">
    <property type="taxonomic scope" value="Bacteria"/>
</dbReference>
<dbReference type="HOGENOM" id="CLU_017947_3_1_5"/>
<dbReference type="OrthoDB" id="140919at2"/>
<dbReference type="UniPathway" id="UPA00109">
    <property type="reaction ID" value="UER00181"/>
</dbReference>
<dbReference type="UniPathway" id="UPA00138"/>
<dbReference type="Proteomes" id="UP000002257">
    <property type="component" value="Chromosome"/>
</dbReference>
<dbReference type="GO" id="GO:0005829">
    <property type="term" value="C:cytosol"/>
    <property type="evidence" value="ECO:0007669"/>
    <property type="project" value="TreeGrafter"/>
</dbReference>
<dbReference type="GO" id="GO:0097367">
    <property type="term" value="F:carbohydrate derivative binding"/>
    <property type="evidence" value="ECO:0007669"/>
    <property type="project" value="InterPro"/>
</dbReference>
<dbReference type="GO" id="GO:0004347">
    <property type="term" value="F:glucose-6-phosphate isomerase activity"/>
    <property type="evidence" value="ECO:0007669"/>
    <property type="project" value="UniProtKB-UniRule"/>
</dbReference>
<dbReference type="GO" id="GO:0048029">
    <property type="term" value="F:monosaccharide binding"/>
    <property type="evidence" value="ECO:0007669"/>
    <property type="project" value="TreeGrafter"/>
</dbReference>
<dbReference type="GO" id="GO:0006094">
    <property type="term" value="P:gluconeogenesis"/>
    <property type="evidence" value="ECO:0007669"/>
    <property type="project" value="UniProtKB-UniRule"/>
</dbReference>
<dbReference type="GO" id="GO:0051156">
    <property type="term" value="P:glucose 6-phosphate metabolic process"/>
    <property type="evidence" value="ECO:0007669"/>
    <property type="project" value="TreeGrafter"/>
</dbReference>
<dbReference type="GO" id="GO:0006096">
    <property type="term" value="P:glycolytic process"/>
    <property type="evidence" value="ECO:0007669"/>
    <property type="project" value="UniProtKB-UniRule"/>
</dbReference>
<dbReference type="CDD" id="cd05015">
    <property type="entry name" value="SIS_PGI_1"/>
    <property type="match status" value="1"/>
</dbReference>
<dbReference type="CDD" id="cd05016">
    <property type="entry name" value="SIS_PGI_2"/>
    <property type="match status" value="1"/>
</dbReference>
<dbReference type="Gene3D" id="1.10.1390.10">
    <property type="match status" value="1"/>
</dbReference>
<dbReference type="Gene3D" id="3.40.50.10490">
    <property type="entry name" value="Glucose-6-phosphate isomerase like protein, domain 1"/>
    <property type="match status" value="2"/>
</dbReference>
<dbReference type="HAMAP" id="MF_00473">
    <property type="entry name" value="G6P_isomerase"/>
    <property type="match status" value="1"/>
</dbReference>
<dbReference type="InterPro" id="IPR001672">
    <property type="entry name" value="G6P_Isomerase"/>
</dbReference>
<dbReference type="InterPro" id="IPR023096">
    <property type="entry name" value="G6P_Isomerase_C"/>
</dbReference>
<dbReference type="InterPro" id="IPR018189">
    <property type="entry name" value="Phosphoglucose_isomerase_CS"/>
</dbReference>
<dbReference type="InterPro" id="IPR046348">
    <property type="entry name" value="SIS_dom_sf"/>
</dbReference>
<dbReference type="InterPro" id="IPR035476">
    <property type="entry name" value="SIS_PGI_1"/>
</dbReference>
<dbReference type="InterPro" id="IPR035482">
    <property type="entry name" value="SIS_PGI_2"/>
</dbReference>
<dbReference type="NCBIfam" id="NF001211">
    <property type="entry name" value="PRK00179.1"/>
    <property type="match status" value="1"/>
</dbReference>
<dbReference type="PANTHER" id="PTHR11469">
    <property type="entry name" value="GLUCOSE-6-PHOSPHATE ISOMERASE"/>
    <property type="match status" value="1"/>
</dbReference>
<dbReference type="PANTHER" id="PTHR11469:SF1">
    <property type="entry name" value="GLUCOSE-6-PHOSPHATE ISOMERASE"/>
    <property type="match status" value="1"/>
</dbReference>
<dbReference type="Pfam" id="PF00342">
    <property type="entry name" value="PGI"/>
    <property type="match status" value="1"/>
</dbReference>
<dbReference type="PRINTS" id="PR00662">
    <property type="entry name" value="G6PISOMERASE"/>
</dbReference>
<dbReference type="SUPFAM" id="SSF53697">
    <property type="entry name" value="SIS domain"/>
    <property type="match status" value="1"/>
</dbReference>
<dbReference type="PROSITE" id="PS00765">
    <property type="entry name" value="P_GLUCOSE_ISOMERASE_1"/>
    <property type="match status" value="1"/>
</dbReference>
<dbReference type="PROSITE" id="PS00174">
    <property type="entry name" value="P_GLUCOSE_ISOMERASE_2"/>
    <property type="match status" value="1"/>
</dbReference>
<dbReference type="PROSITE" id="PS51463">
    <property type="entry name" value="P_GLUCOSE_ISOMERASE_3"/>
    <property type="match status" value="1"/>
</dbReference>
<protein>
    <recommendedName>
        <fullName evidence="1">Glucose-6-phosphate isomerase</fullName>
        <shortName evidence="1">GPI</shortName>
        <ecNumber evidence="1">5.3.1.9</ecNumber>
    </recommendedName>
    <alternativeName>
        <fullName evidence="1">Phosphoglucose isomerase</fullName>
        <shortName evidence="1">PGI</shortName>
    </alternativeName>
    <alternativeName>
        <fullName evidence="1">Phosphohexose isomerase</fullName>
        <shortName evidence="1">PHI</shortName>
    </alternativeName>
</protein>